<organism>
    <name type="scientific">Borreliella afzelii (strain PKo)</name>
    <name type="common">Borrelia afzelii</name>
    <dbReference type="NCBI Taxonomy" id="390236"/>
    <lineage>
        <taxon>Bacteria</taxon>
        <taxon>Pseudomonadati</taxon>
        <taxon>Spirochaetota</taxon>
        <taxon>Spirochaetia</taxon>
        <taxon>Spirochaetales</taxon>
        <taxon>Borreliaceae</taxon>
        <taxon>Borreliella</taxon>
    </lineage>
</organism>
<feature type="chain" id="PRO_1000079657" description="GTPase Era">
    <location>
        <begin position="1"/>
        <end position="290"/>
    </location>
</feature>
<feature type="domain" description="Era-type G" evidence="2">
    <location>
        <begin position="2"/>
        <end position="169"/>
    </location>
</feature>
<feature type="domain" description="KH type-2" evidence="1">
    <location>
        <begin position="200"/>
        <end position="276"/>
    </location>
</feature>
<feature type="region of interest" description="G1" evidence="2">
    <location>
        <begin position="10"/>
        <end position="17"/>
    </location>
</feature>
<feature type="region of interest" description="G2" evidence="2">
    <location>
        <begin position="36"/>
        <end position="40"/>
    </location>
</feature>
<feature type="region of interest" description="G3" evidence="2">
    <location>
        <begin position="57"/>
        <end position="60"/>
    </location>
</feature>
<feature type="region of interest" description="G4" evidence="2">
    <location>
        <begin position="119"/>
        <end position="122"/>
    </location>
</feature>
<feature type="region of interest" description="G5" evidence="2">
    <location>
        <begin position="148"/>
        <end position="150"/>
    </location>
</feature>
<feature type="binding site" evidence="1">
    <location>
        <begin position="10"/>
        <end position="17"/>
    </location>
    <ligand>
        <name>GTP</name>
        <dbReference type="ChEBI" id="CHEBI:37565"/>
    </ligand>
</feature>
<feature type="binding site" evidence="1">
    <location>
        <begin position="57"/>
        <end position="61"/>
    </location>
    <ligand>
        <name>GTP</name>
        <dbReference type="ChEBI" id="CHEBI:37565"/>
    </ligand>
</feature>
<feature type="binding site" evidence="1">
    <location>
        <begin position="119"/>
        <end position="122"/>
    </location>
    <ligand>
        <name>GTP</name>
        <dbReference type="ChEBI" id="CHEBI:37565"/>
    </ligand>
</feature>
<dbReference type="EMBL" id="CP000395">
    <property type="protein sequence ID" value="ABH01935.1"/>
    <property type="molecule type" value="Genomic_DNA"/>
</dbReference>
<dbReference type="EMBL" id="CP002933">
    <property type="protein sequence ID" value="AEL69880.1"/>
    <property type="molecule type" value="Genomic_DNA"/>
</dbReference>
<dbReference type="RefSeq" id="WP_004789548.1">
    <property type="nucleotide sequence ID" value="NZ_CP160066.1"/>
</dbReference>
<dbReference type="SMR" id="Q0SMJ3"/>
<dbReference type="STRING" id="29518.BLA32_00935"/>
<dbReference type="GeneID" id="77265513"/>
<dbReference type="KEGG" id="baf:BAPKO_0704"/>
<dbReference type="KEGG" id="bafz:BafPKo_0684"/>
<dbReference type="PATRIC" id="fig|390236.22.peg.653"/>
<dbReference type="eggNOG" id="COG1159">
    <property type="taxonomic scope" value="Bacteria"/>
</dbReference>
<dbReference type="HOGENOM" id="CLU_038009_1_0_12"/>
<dbReference type="OrthoDB" id="9805918at2"/>
<dbReference type="Proteomes" id="UP000005216">
    <property type="component" value="Chromosome"/>
</dbReference>
<dbReference type="GO" id="GO:0005829">
    <property type="term" value="C:cytosol"/>
    <property type="evidence" value="ECO:0007669"/>
    <property type="project" value="TreeGrafter"/>
</dbReference>
<dbReference type="GO" id="GO:0005886">
    <property type="term" value="C:plasma membrane"/>
    <property type="evidence" value="ECO:0007669"/>
    <property type="project" value="UniProtKB-SubCell"/>
</dbReference>
<dbReference type="GO" id="GO:0005525">
    <property type="term" value="F:GTP binding"/>
    <property type="evidence" value="ECO:0007669"/>
    <property type="project" value="UniProtKB-UniRule"/>
</dbReference>
<dbReference type="GO" id="GO:0003924">
    <property type="term" value="F:GTPase activity"/>
    <property type="evidence" value="ECO:0007669"/>
    <property type="project" value="UniProtKB-UniRule"/>
</dbReference>
<dbReference type="GO" id="GO:0043024">
    <property type="term" value="F:ribosomal small subunit binding"/>
    <property type="evidence" value="ECO:0007669"/>
    <property type="project" value="TreeGrafter"/>
</dbReference>
<dbReference type="GO" id="GO:0070181">
    <property type="term" value="F:small ribosomal subunit rRNA binding"/>
    <property type="evidence" value="ECO:0007669"/>
    <property type="project" value="UniProtKB-UniRule"/>
</dbReference>
<dbReference type="GO" id="GO:0000028">
    <property type="term" value="P:ribosomal small subunit assembly"/>
    <property type="evidence" value="ECO:0007669"/>
    <property type="project" value="TreeGrafter"/>
</dbReference>
<dbReference type="CDD" id="cd04163">
    <property type="entry name" value="Era"/>
    <property type="match status" value="1"/>
</dbReference>
<dbReference type="CDD" id="cd22534">
    <property type="entry name" value="KH-II_Era"/>
    <property type="match status" value="1"/>
</dbReference>
<dbReference type="Gene3D" id="3.30.300.20">
    <property type="match status" value="1"/>
</dbReference>
<dbReference type="Gene3D" id="3.40.50.300">
    <property type="entry name" value="P-loop containing nucleotide triphosphate hydrolases"/>
    <property type="match status" value="1"/>
</dbReference>
<dbReference type="HAMAP" id="MF_00367">
    <property type="entry name" value="GTPase_Era"/>
    <property type="match status" value="1"/>
</dbReference>
<dbReference type="InterPro" id="IPR030388">
    <property type="entry name" value="G_ERA_dom"/>
</dbReference>
<dbReference type="InterPro" id="IPR006073">
    <property type="entry name" value="GTP-bd"/>
</dbReference>
<dbReference type="InterPro" id="IPR005662">
    <property type="entry name" value="GTPase_Era-like"/>
</dbReference>
<dbReference type="InterPro" id="IPR015946">
    <property type="entry name" value="KH_dom-like_a/b"/>
</dbReference>
<dbReference type="InterPro" id="IPR004044">
    <property type="entry name" value="KH_dom_type_2"/>
</dbReference>
<dbReference type="InterPro" id="IPR009019">
    <property type="entry name" value="KH_sf_prok-type"/>
</dbReference>
<dbReference type="InterPro" id="IPR027417">
    <property type="entry name" value="P-loop_NTPase"/>
</dbReference>
<dbReference type="InterPro" id="IPR005225">
    <property type="entry name" value="Small_GTP-bd"/>
</dbReference>
<dbReference type="NCBIfam" id="TIGR00436">
    <property type="entry name" value="era"/>
    <property type="match status" value="1"/>
</dbReference>
<dbReference type="NCBIfam" id="NF000908">
    <property type="entry name" value="PRK00089.1"/>
    <property type="match status" value="1"/>
</dbReference>
<dbReference type="NCBIfam" id="TIGR00231">
    <property type="entry name" value="small_GTP"/>
    <property type="match status" value="1"/>
</dbReference>
<dbReference type="PANTHER" id="PTHR42698">
    <property type="entry name" value="GTPASE ERA"/>
    <property type="match status" value="1"/>
</dbReference>
<dbReference type="PANTHER" id="PTHR42698:SF1">
    <property type="entry name" value="GTPASE ERA, MITOCHONDRIAL"/>
    <property type="match status" value="1"/>
</dbReference>
<dbReference type="Pfam" id="PF07650">
    <property type="entry name" value="KH_2"/>
    <property type="match status" value="1"/>
</dbReference>
<dbReference type="Pfam" id="PF01926">
    <property type="entry name" value="MMR_HSR1"/>
    <property type="match status" value="1"/>
</dbReference>
<dbReference type="PRINTS" id="PR00326">
    <property type="entry name" value="GTP1OBG"/>
</dbReference>
<dbReference type="SUPFAM" id="SSF52540">
    <property type="entry name" value="P-loop containing nucleoside triphosphate hydrolases"/>
    <property type="match status" value="1"/>
</dbReference>
<dbReference type="SUPFAM" id="SSF54814">
    <property type="entry name" value="Prokaryotic type KH domain (KH-domain type II)"/>
    <property type="match status" value="1"/>
</dbReference>
<dbReference type="PROSITE" id="PS51713">
    <property type="entry name" value="G_ERA"/>
    <property type="match status" value="1"/>
</dbReference>
<dbReference type="PROSITE" id="PS50823">
    <property type="entry name" value="KH_TYPE_2"/>
    <property type="match status" value="1"/>
</dbReference>
<sequence length="290" mass="33382">MKSGFAAILGRPSTGKSTLLNSICGHKISIISPIPQTTRNKIKGIFTDDRGQIIFIDTPGFHLSKKKFNIAMMNNIHSSIGEVELILYIIDIQDTPGEEENKMLEIIKNSKIKFLVLLNKVDLKNTKIKEITQFLKEKGIEDSNIIKISAEKKINTEELKNKIYENFSEGPLYYPQEYYTDQKINFRISEIIREKAIENLKEELPYSLYVDIDTLENKKRGLFIRANIFVANESQKGIIVGKNGKEIKSIGERARKTIAKIFETKCNLFLQVKLKKNWNKEDKLIKRLIN</sequence>
<keyword id="KW-0997">Cell inner membrane</keyword>
<keyword id="KW-1003">Cell membrane</keyword>
<keyword id="KW-0963">Cytoplasm</keyword>
<keyword id="KW-0342">GTP-binding</keyword>
<keyword id="KW-0472">Membrane</keyword>
<keyword id="KW-0547">Nucleotide-binding</keyword>
<keyword id="KW-0690">Ribosome biogenesis</keyword>
<keyword id="KW-0694">RNA-binding</keyword>
<keyword id="KW-0699">rRNA-binding</keyword>
<proteinExistence type="inferred from homology"/>
<comment type="function">
    <text evidence="1">An essential GTPase that binds both GDP and GTP, with rapid nucleotide exchange. Plays a role in 16S rRNA processing and 30S ribosomal subunit biogenesis and possibly also in cell cycle regulation and energy metabolism.</text>
</comment>
<comment type="subunit">
    <text evidence="1">Monomer.</text>
</comment>
<comment type="subcellular location">
    <subcellularLocation>
        <location>Cytoplasm</location>
    </subcellularLocation>
    <subcellularLocation>
        <location evidence="1">Cell inner membrane</location>
        <topology evidence="1">Peripheral membrane protein</topology>
    </subcellularLocation>
</comment>
<comment type="similarity">
    <text evidence="1 2">Belongs to the TRAFAC class TrmE-Era-EngA-EngB-Septin-like GTPase superfamily. Era GTPase family.</text>
</comment>
<gene>
    <name evidence="1" type="primary">era</name>
    <name type="ordered locus">BAPKO_0704</name>
    <name type="ordered locus">BafPKo_0684</name>
</gene>
<accession>Q0SMJ3</accession>
<accession>G0IQL0</accession>
<reference key="1">
    <citation type="journal article" date="2006" name="BMC Genomics">
        <title>Comparative genome analysis: selection pressure on the Borrelia vls cassettes is essential for infectivity.</title>
        <authorList>
            <person name="Gloeckner G."/>
            <person name="Schulte-Spechtel U."/>
            <person name="Schilhabel M."/>
            <person name="Felder M."/>
            <person name="Suehnel J."/>
            <person name="Wilske B."/>
            <person name="Platzer M."/>
        </authorList>
    </citation>
    <scope>NUCLEOTIDE SEQUENCE [LARGE SCALE GENOMIC DNA]</scope>
    <source>
        <strain>PKo</strain>
    </source>
</reference>
<reference key="2">
    <citation type="journal article" date="2011" name="J. Bacteriol.">
        <title>Whole-genome sequences of two Borrelia afzelii and two Borrelia garinii Lyme disease agent isolates.</title>
        <authorList>
            <person name="Casjens S.R."/>
            <person name="Mongodin E.F."/>
            <person name="Qiu W.G."/>
            <person name="Dunn J.J."/>
            <person name="Luft B.J."/>
            <person name="Fraser-Liggett C.M."/>
            <person name="Schutzer S.E."/>
        </authorList>
    </citation>
    <scope>NUCLEOTIDE SEQUENCE [LARGE SCALE GENOMIC DNA]</scope>
    <source>
        <strain>PKo</strain>
    </source>
</reference>
<evidence type="ECO:0000255" key="1">
    <source>
        <dbReference type="HAMAP-Rule" id="MF_00367"/>
    </source>
</evidence>
<evidence type="ECO:0000255" key="2">
    <source>
        <dbReference type="PROSITE-ProRule" id="PRU01050"/>
    </source>
</evidence>
<protein>
    <recommendedName>
        <fullName evidence="1">GTPase Era</fullName>
    </recommendedName>
</protein>
<name>ERA_BORAP</name>